<organism>
    <name type="scientific">Actinobacillus succinogenes (strain ATCC 55618 / DSM 22257 / CCUG 43843 / 130Z)</name>
    <dbReference type="NCBI Taxonomy" id="339671"/>
    <lineage>
        <taxon>Bacteria</taxon>
        <taxon>Pseudomonadati</taxon>
        <taxon>Pseudomonadota</taxon>
        <taxon>Gammaproteobacteria</taxon>
        <taxon>Pasteurellales</taxon>
        <taxon>Pasteurellaceae</taxon>
        <taxon>Actinobacillus</taxon>
    </lineage>
</organism>
<name>SUCC_ACTSZ</name>
<comment type="function">
    <text evidence="1">Succinyl-CoA synthetase functions in the citric acid cycle (TCA), coupling the hydrolysis of succinyl-CoA to the synthesis of either ATP or GTP and thus represents the only step of substrate-level phosphorylation in the TCA. The beta subunit provides nucleotide specificity of the enzyme and binds the substrate succinate, while the binding sites for coenzyme A and phosphate are found in the alpha subunit.</text>
</comment>
<comment type="catalytic activity">
    <reaction evidence="1">
        <text>succinate + ATP + CoA = succinyl-CoA + ADP + phosphate</text>
        <dbReference type="Rhea" id="RHEA:17661"/>
        <dbReference type="ChEBI" id="CHEBI:30031"/>
        <dbReference type="ChEBI" id="CHEBI:30616"/>
        <dbReference type="ChEBI" id="CHEBI:43474"/>
        <dbReference type="ChEBI" id="CHEBI:57287"/>
        <dbReference type="ChEBI" id="CHEBI:57292"/>
        <dbReference type="ChEBI" id="CHEBI:456216"/>
        <dbReference type="EC" id="6.2.1.5"/>
    </reaction>
    <physiologicalReaction direction="right-to-left" evidence="1">
        <dbReference type="Rhea" id="RHEA:17663"/>
    </physiologicalReaction>
</comment>
<comment type="catalytic activity">
    <reaction evidence="1">
        <text>GTP + succinate + CoA = succinyl-CoA + GDP + phosphate</text>
        <dbReference type="Rhea" id="RHEA:22120"/>
        <dbReference type="ChEBI" id="CHEBI:30031"/>
        <dbReference type="ChEBI" id="CHEBI:37565"/>
        <dbReference type="ChEBI" id="CHEBI:43474"/>
        <dbReference type="ChEBI" id="CHEBI:57287"/>
        <dbReference type="ChEBI" id="CHEBI:57292"/>
        <dbReference type="ChEBI" id="CHEBI:58189"/>
    </reaction>
    <physiologicalReaction direction="right-to-left" evidence="1">
        <dbReference type="Rhea" id="RHEA:22122"/>
    </physiologicalReaction>
</comment>
<comment type="cofactor">
    <cofactor evidence="1">
        <name>Mg(2+)</name>
        <dbReference type="ChEBI" id="CHEBI:18420"/>
    </cofactor>
    <text evidence="1">Binds 1 Mg(2+) ion per subunit.</text>
</comment>
<comment type="pathway">
    <text evidence="1">Carbohydrate metabolism; tricarboxylic acid cycle; succinate from succinyl-CoA (ligase route): step 1/1.</text>
</comment>
<comment type="subunit">
    <text evidence="1">Heterotetramer of two alpha and two beta subunits.</text>
</comment>
<comment type="similarity">
    <text evidence="1">Belongs to the succinate/malate CoA ligase beta subunit family.</text>
</comment>
<sequence>MNLHEYQSKQIFAQYDLPVSKGYPCETVEQALKAIEKLGGDQWVAKCQVYAGGRGKAGGVKVVSSEAEVRSFFERFLGKRLVTLQTDAQGQPVNTIYLEACAAVKKELYVGMVIDRANRRIVFMASTEGGVNIEEVAEKTPHLLHKVAIDPFMGAQPFQGRELACKLGLTGKQIHQFAHIFCRLSKMFSEKDLSLVEINPLVILQNDDLHCLDAKIVVDGNALYRHADLKSLQDPSQEDPREAEAEALGLNYVALDGNIGCMVNGAGLAMGTMDIIKLQGGLPANFLDVGGSATKERVAGAFKIILSDTNVKAILVNIFGGIVRCDLIAEGIVAAVNEVGVTVPVVVRLEGNNAERGREILAQSGLNIIAAESLKDAAVQAVNAAK</sequence>
<evidence type="ECO:0000255" key="1">
    <source>
        <dbReference type="HAMAP-Rule" id="MF_00558"/>
    </source>
</evidence>
<reference key="1">
    <citation type="journal article" date="2010" name="BMC Genomics">
        <title>A genomic perspective on the potential of Actinobacillus succinogenes for industrial succinate production.</title>
        <authorList>
            <person name="McKinlay J.B."/>
            <person name="Laivenieks M."/>
            <person name="Schindler B.D."/>
            <person name="McKinlay A.A."/>
            <person name="Siddaramappa S."/>
            <person name="Challacombe J.F."/>
            <person name="Lowry S.R."/>
            <person name="Clum A."/>
            <person name="Lapidus A.L."/>
            <person name="Burkhart K.B."/>
            <person name="Harkins V."/>
            <person name="Vieille C."/>
        </authorList>
    </citation>
    <scope>NUCLEOTIDE SEQUENCE [LARGE SCALE GENOMIC DNA]</scope>
    <source>
        <strain>ATCC 55618 / DSM 22257 / CCUG 43843 / 130Z</strain>
    </source>
</reference>
<proteinExistence type="inferred from homology"/>
<feature type="chain" id="PRO_1000081991" description="Succinate--CoA ligase [ADP-forming] subunit beta">
    <location>
        <begin position="1"/>
        <end position="386"/>
    </location>
</feature>
<feature type="binding site" evidence="1">
    <location>
        <position position="46"/>
    </location>
    <ligand>
        <name>ATP</name>
        <dbReference type="ChEBI" id="CHEBI:30616"/>
    </ligand>
</feature>
<feature type="binding site" evidence="1">
    <location>
        <begin position="53"/>
        <end position="55"/>
    </location>
    <ligand>
        <name>ATP</name>
        <dbReference type="ChEBI" id="CHEBI:30616"/>
    </ligand>
</feature>
<feature type="binding site" evidence="1">
    <location>
        <position position="99"/>
    </location>
    <ligand>
        <name>ATP</name>
        <dbReference type="ChEBI" id="CHEBI:30616"/>
    </ligand>
</feature>
<feature type="binding site" evidence="1">
    <location>
        <position position="102"/>
    </location>
    <ligand>
        <name>ATP</name>
        <dbReference type="ChEBI" id="CHEBI:30616"/>
    </ligand>
</feature>
<feature type="binding site" evidence="1">
    <location>
        <position position="107"/>
    </location>
    <ligand>
        <name>ATP</name>
        <dbReference type="ChEBI" id="CHEBI:30616"/>
    </ligand>
</feature>
<feature type="binding site" evidence="1">
    <location>
        <position position="199"/>
    </location>
    <ligand>
        <name>Mg(2+)</name>
        <dbReference type="ChEBI" id="CHEBI:18420"/>
    </ligand>
</feature>
<feature type="binding site" evidence="1">
    <location>
        <position position="213"/>
    </location>
    <ligand>
        <name>Mg(2+)</name>
        <dbReference type="ChEBI" id="CHEBI:18420"/>
    </ligand>
</feature>
<feature type="binding site" evidence="1">
    <location>
        <position position="264"/>
    </location>
    <ligand>
        <name>substrate</name>
        <note>ligand shared with subunit alpha</note>
    </ligand>
</feature>
<feature type="binding site" evidence="1">
    <location>
        <begin position="321"/>
        <end position="323"/>
    </location>
    <ligand>
        <name>substrate</name>
        <note>ligand shared with subunit alpha</note>
    </ligand>
</feature>
<gene>
    <name evidence="1" type="primary">sucC</name>
    <name type="ordered locus">Asuc_1565</name>
</gene>
<accession>A6VPM2</accession>
<dbReference type="EC" id="6.2.1.5" evidence="1"/>
<dbReference type="EMBL" id="CP000746">
    <property type="protein sequence ID" value="ABR74919.1"/>
    <property type="molecule type" value="Genomic_DNA"/>
</dbReference>
<dbReference type="RefSeq" id="WP_012073296.1">
    <property type="nucleotide sequence ID" value="NC_009655.1"/>
</dbReference>
<dbReference type="SMR" id="A6VPM2"/>
<dbReference type="STRING" id="339671.Asuc_1565"/>
<dbReference type="KEGG" id="asu:Asuc_1565"/>
<dbReference type="eggNOG" id="COG0045">
    <property type="taxonomic scope" value="Bacteria"/>
</dbReference>
<dbReference type="HOGENOM" id="CLU_037430_0_2_6"/>
<dbReference type="OrthoDB" id="9802602at2"/>
<dbReference type="UniPathway" id="UPA00223">
    <property type="reaction ID" value="UER00999"/>
</dbReference>
<dbReference type="Proteomes" id="UP000001114">
    <property type="component" value="Chromosome"/>
</dbReference>
<dbReference type="GO" id="GO:0005829">
    <property type="term" value="C:cytosol"/>
    <property type="evidence" value="ECO:0007669"/>
    <property type="project" value="TreeGrafter"/>
</dbReference>
<dbReference type="GO" id="GO:0042709">
    <property type="term" value="C:succinate-CoA ligase complex"/>
    <property type="evidence" value="ECO:0007669"/>
    <property type="project" value="TreeGrafter"/>
</dbReference>
<dbReference type="GO" id="GO:0005524">
    <property type="term" value="F:ATP binding"/>
    <property type="evidence" value="ECO:0007669"/>
    <property type="project" value="UniProtKB-UniRule"/>
</dbReference>
<dbReference type="GO" id="GO:0000287">
    <property type="term" value="F:magnesium ion binding"/>
    <property type="evidence" value="ECO:0007669"/>
    <property type="project" value="UniProtKB-UniRule"/>
</dbReference>
<dbReference type="GO" id="GO:0004775">
    <property type="term" value="F:succinate-CoA ligase (ADP-forming) activity"/>
    <property type="evidence" value="ECO:0007669"/>
    <property type="project" value="UniProtKB-UniRule"/>
</dbReference>
<dbReference type="GO" id="GO:0004776">
    <property type="term" value="F:succinate-CoA ligase (GDP-forming) activity"/>
    <property type="evidence" value="ECO:0007669"/>
    <property type="project" value="RHEA"/>
</dbReference>
<dbReference type="GO" id="GO:0006104">
    <property type="term" value="P:succinyl-CoA metabolic process"/>
    <property type="evidence" value="ECO:0007669"/>
    <property type="project" value="TreeGrafter"/>
</dbReference>
<dbReference type="GO" id="GO:0006099">
    <property type="term" value="P:tricarboxylic acid cycle"/>
    <property type="evidence" value="ECO:0007669"/>
    <property type="project" value="UniProtKB-UniRule"/>
</dbReference>
<dbReference type="FunFam" id="3.30.1490.20:FF:000002">
    <property type="entry name" value="Succinate--CoA ligase [ADP-forming] subunit beta"/>
    <property type="match status" value="1"/>
</dbReference>
<dbReference type="FunFam" id="3.30.470.20:FF:000002">
    <property type="entry name" value="Succinate--CoA ligase [ADP-forming] subunit beta"/>
    <property type="match status" value="1"/>
</dbReference>
<dbReference type="FunFam" id="3.40.50.261:FF:000001">
    <property type="entry name" value="Succinate--CoA ligase [ADP-forming] subunit beta"/>
    <property type="match status" value="1"/>
</dbReference>
<dbReference type="Gene3D" id="3.30.1490.20">
    <property type="entry name" value="ATP-grasp fold, A domain"/>
    <property type="match status" value="1"/>
</dbReference>
<dbReference type="Gene3D" id="3.30.470.20">
    <property type="entry name" value="ATP-grasp fold, B domain"/>
    <property type="match status" value="1"/>
</dbReference>
<dbReference type="Gene3D" id="3.40.50.261">
    <property type="entry name" value="Succinyl-CoA synthetase domains"/>
    <property type="match status" value="1"/>
</dbReference>
<dbReference type="HAMAP" id="MF_00558">
    <property type="entry name" value="Succ_CoA_beta"/>
    <property type="match status" value="1"/>
</dbReference>
<dbReference type="InterPro" id="IPR013650">
    <property type="entry name" value="ATP-grasp_succ-CoA_synth-type"/>
</dbReference>
<dbReference type="InterPro" id="IPR013815">
    <property type="entry name" value="ATP_grasp_subdomain_1"/>
</dbReference>
<dbReference type="InterPro" id="IPR017866">
    <property type="entry name" value="Succ-CoA_synthase_bsu_CS"/>
</dbReference>
<dbReference type="InterPro" id="IPR005811">
    <property type="entry name" value="SUCC_ACL_C"/>
</dbReference>
<dbReference type="InterPro" id="IPR005809">
    <property type="entry name" value="Succ_CoA_ligase-like_bsu"/>
</dbReference>
<dbReference type="InterPro" id="IPR016102">
    <property type="entry name" value="Succinyl-CoA_synth-like"/>
</dbReference>
<dbReference type="NCBIfam" id="NF001913">
    <property type="entry name" value="PRK00696.1"/>
    <property type="match status" value="1"/>
</dbReference>
<dbReference type="NCBIfam" id="TIGR01016">
    <property type="entry name" value="sucCoAbeta"/>
    <property type="match status" value="1"/>
</dbReference>
<dbReference type="PANTHER" id="PTHR11815:SF10">
    <property type="entry name" value="SUCCINATE--COA LIGASE [GDP-FORMING] SUBUNIT BETA, MITOCHONDRIAL"/>
    <property type="match status" value="1"/>
</dbReference>
<dbReference type="PANTHER" id="PTHR11815">
    <property type="entry name" value="SUCCINYL-COA SYNTHETASE BETA CHAIN"/>
    <property type="match status" value="1"/>
</dbReference>
<dbReference type="Pfam" id="PF08442">
    <property type="entry name" value="ATP-grasp_2"/>
    <property type="match status" value="1"/>
</dbReference>
<dbReference type="Pfam" id="PF00549">
    <property type="entry name" value="Ligase_CoA"/>
    <property type="match status" value="1"/>
</dbReference>
<dbReference type="PIRSF" id="PIRSF001554">
    <property type="entry name" value="SucCS_beta"/>
    <property type="match status" value="1"/>
</dbReference>
<dbReference type="SUPFAM" id="SSF56059">
    <property type="entry name" value="Glutathione synthetase ATP-binding domain-like"/>
    <property type="match status" value="1"/>
</dbReference>
<dbReference type="SUPFAM" id="SSF52210">
    <property type="entry name" value="Succinyl-CoA synthetase domains"/>
    <property type="match status" value="1"/>
</dbReference>
<dbReference type="PROSITE" id="PS01217">
    <property type="entry name" value="SUCCINYL_COA_LIG_3"/>
    <property type="match status" value="1"/>
</dbReference>
<protein>
    <recommendedName>
        <fullName evidence="1">Succinate--CoA ligase [ADP-forming] subunit beta</fullName>
        <ecNumber evidence="1">6.2.1.5</ecNumber>
    </recommendedName>
    <alternativeName>
        <fullName evidence="1">Succinyl-CoA synthetase subunit beta</fullName>
        <shortName evidence="1">SCS-beta</shortName>
    </alternativeName>
</protein>
<keyword id="KW-0067">ATP-binding</keyword>
<keyword id="KW-0436">Ligase</keyword>
<keyword id="KW-0460">Magnesium</keyword>
<keyword id="KW-0479">Metal-binding</keyword>
<keyword id="KW-0547">Nucleotide-binding</keyword>
<keyword id="KW-1185">Reference proteome</keyword>
<keyword id="KW-0816">Tricarboxylic acid cycle</keyword>